<comment type="induction">
    <text evidence="2">Expressed in the late phase of the viral replicative cycle.</text>
</comment>
<comment type="similarity">
    <text evidence="2">Belongs to the asfivirus helicase C962R family.</text>
</comment>
<reference key="1">
    <citation type="submission" date="2003-03" db="EMBL/GenBank/DDBJ databases">
        <title>African swine fever virus genomes.</title>
        <authorList>
            <person name="Kutish G.F."/>
            <person name="Rock D.L."/>
        </authorList>
    </citation>
    <scope>NUCLEOTIDE SEQUENCE [LARGE SCALE GENOMIC DNA]</scope>
</reference>
<dbReference type="EC" id="3.6.4.-"/>
<dbReference type="EMBL" id="AY261360">
    <property type="status" value="NOT_ANNOTATED_CDS"/>
    <property type="molecule type" value="Genomic_DNA"/>
</dbReference>
<dbReference type="SMR" id="P0C9X2"/>
<dbReference type="Proteomes" id="UP000000861">
    <property type="component" value="Segment"/>
</dbReference>
<dbReference type="GO" id="GO:0005524">
    <property type="term" value="F:ATP binding"/>
    <property type="evidence" value="ECO:0007669"/>
    <property type="project" value="UniProtKB-KW"/>
</dbReference>
<dbReference type="GO" id="GO:0004386">
    <property type="term" value="F:helicase activity"/>
    <property type="evidence" value="ECO:0007669"/>
    <property type="project" value="UniProtKB-KW"/>
</dbReference>
<dbReference type="GO" id="GO:0016817">
    <property type="term" value="F:hydrolase activity, acting on acid anhydrides"/>
    <property type="evidence" value="ECO:0007669"/>
    <property type="project" value="InterPro"/>
</dbReference>
<dbReference type="GO" id="GO:0006260">
    <property type="term" value="P:DNA replication"/>
    <property type="evidence" value="ECO:0007669"/>
    <property type="project" value="UniProtKB-KW"/>
</dbReference>
<dbReference type="Gene3D" id="3.40.50.300">
    <property type="entry name" value="P-loop containing nucleotide triphosphate hydrolases"/>
    <property type="match status" value="1"/>
</dbReference>
<dbReference type="InterPro" id="IPR056443">
    <property type="entry name" value="AEP_C962R"/>
</dbReference>
<dbReference type="InterPro" id="IPR014015">
    <property type="entry name" value="Helicase_SF3_DNA-vir"/>
</dbReference>
<dbReference type="InterPro" id="IPR027417">
    <property type="entry name" value="P-loop_NTPase"/>
</dbReference>
<dbReference type="InterPro" id="IPR014818">
    <property type="entry name" value="Phage/plasmid_primase_P4_C"/>
</dbReference>
<dbReference type="InterPro" id="IPR014819">
    <property type="entry name" value="PriCT_2"/>
</dbReference>
<dbReference type="InterPro" id="IPR051620">
    <property type="entry name" value="Viral_Helicase-Primase_Cplx"/>
</dbReference>
<dbReference type="PANTHER" id="PTHR35372">
    <property type="entry name" value="ATP BINDING PROTEIN-RELATED"/>
    <property type="match status" value="1"/>
</dbReference>
<dbReference type="PANTHER" id="PTHR35372:SF2">
    <property type="entry name" value="SF3 HELICASE DOMAIN-CONTAINING PROTEIN"/>
    <property type="match status" value="1"/>
</dbReference>
<dbReference type="Pfam" id="PF23162">
    <property type="entry name" value="AEP_C962R"/>
    <property type="match status" value="1"/>
</dbReference>
<dbReference type="Pfam" id="PF08706">
    <property type="entry name" value="D5_N"/>
    <property type="match status" value="1"/>
</dbReference>
<dbReference type="Pfam" id="PF08707">
    <property type="entry name" value="PriCT_2"/>
    <property type="match status" value="1"/>
</dbReference>
<dbReference type="SUPFAM" id="SSF52540">
    <property type="entry name" value="P-loop containing nucleoside triphosphate hydrolases"/>
    <property type="match status" value="1"/>
</dbReference>
<dbReference type="PROSITE" id="PS51206">
    <property type="entry name" value="SF3_HELICASE_1"/>
    <property type="match status" value="1"/>
</dbReference>
<organism>
    <name type="scientific">African swine fever virus (isolate Pig/Kenya/KEN-50/1950)</name>
    <name type="common">ASFV</name>
    <dbReference type="NCBI Taxonomy" id="561445"/>
    <lineage>
        <taxon>Viruses</taxon>
        <taxon>Varidnaviria</taxon>
        <taxon>Bamfordvirae</taxon>
        <taxon>Nucleocytoviricota</taxon>
        <taxon>Pokkesviricetes</taxon>
        <taxon>Asfuvirales</taxon>
        <taxon>Asfarviridae</taxon>
        <taxon>Asfivirus</taxon>
        <taxon>African swine fever virus</taxon>
    </lineage>
</organism>
<feature type="chain" id="PRO_0000373377" description="Putative primase C962R">
    <location>
        <begin position="1"/>
        <end position="962"/>
    </location>
</feature>
<feature type="domain" description="SF3 helicase" evidence="1">
    <location>
        <begin position="607"/>
        <end position="775"/>
    </location>
</feature>
<feature type="binding site" evidence="1">
    <location>
        <begin position="636"/>
        <end position="643"/>
    </location>
    <ligand>
        <name>ATP</name>
        <dbReference type="ChEBI" id="CHEBI:30616"/>
    </ligand>
</feature>
<keyword id="KW-0067">ATP-binding</keyword>
<keyword id="KW-0235">DNA replication</keyword>
<keyword id="KW-0347">Helicase</keyword>
<keyword id="KW-0378">Hydrolase</keyword>
<keyword id="KW-0426">Late protein</keyword>
<keyword id="KW-0547">Nucleotide-binding</keyword>
<gene>
    <name type="ordered locus">Ken-083</name>
</gene>
<evidence type="ECO:0000255" key="1">
    <source>
        <dbReference type="PROSITE-ProRule" id="PRU00551"/>
    </source>
</evidence>
<evidence type="ECO:0000305" key="2"/>
<proteinExistence type="inferred from homology"/>
<organismHost>
    <name type="scientific">Ornithodoros</name>
    <name type="common">relapsing fever ticks</name>
    <dbReference type="NCBI Taxonomy" id="6937"/>
</organismHost>
<organismHost>
    <name type="scientific">Phacochoerus aethiopicus</name>
    <name type="common">Warthog</name>
    <dbReference type="NCBI Taxonomy" id="85517"/>
</organismHost>
<organismHost>
    <name type="scientific">Phacochoerus africanus</name>
    <name type="common">Warthog</name>
    <dbReference type="NCBI Taxonomy" id="41426"/>
</organismHost>
<organismHost>
    <name type="scientific">Potamochoerus larvatus</name>
    <name type="common">Bushpig</name>
    <dbReference type="NCBI Taxonomy" id="273792"/>
</organismHost>
<organismHost>
    <name type="scientific">Sus scrofa</name>
    <name type="common">Pig</name>
    <dbReference type="NCBI Taxonomy" id="9823"/>
</organismHost>
<protein>
    <recommendedName>
        <fullName>Putative primase C962R</fullName>
        <ecNumber>3.6.4.-</ecNumber>
    </recommendedName>
</protein>
<sequence length="962" mass="111265">MREESWEEHDTIQLTAQRKYLAEVQALETLLARELSVFLTEPGSKKTNIINRITGKTYALPSTELLRLYEHLEQCRKQGALMYFLERQGTYSGLMLDYDLKLNTNAAPSLESSVLSRLCHRIFVHIKNSSVLPEGSHKIHFFFTLKPEAVQGKYGFHVLIPGLKMAASTKKSIIASLQHDATVQKILHEQGVANPESCLDPHSASVPSLLYGSSKLNHKPYQLKTGFELVFDSSDPDYIPIHQIKNIESYNLVSELSLTNEQGSLVRPVYCAADIAAEKEEEIPADDHSLSILMLHDPEARYLHKILNLLPPEYYVEYPLWSNVVFALANTSANYRPLAEWFSQKCPEKWNTGGKEKLEKLWNDASHHTEKKITKRSIMYWAHKHAPQQYKEIVEQGYFSILAEYVYSYNGTLEHYMIAKVIYAMMGNKFVVDVDSNGKYVWFEFVLPGQPMNQGEIWKWRKEVNPDELHIYISENFSRVMDRITEHIKYHLSQPHETNILNYYKKLLKAFERSKSKIFNDSFKKGVIRQAEFLFRQRSFIQTLDTNPHLLGVGNGVLSIETIPAKLINHFHEHPIHQYTHICYVPFNPENPWTKLLLNALQDIIPELDARLWIMFYLSTAIFRGLKEALMLLWLGGGCNGKTFLMRLVAMVLGDHYASKLNISLLTSYRETAEKPNSAFMRLKGRGYGYFEETNKSEVLNTSRLKEMVNPGDVTARELNQKQESFQMTATMVAASNYNFIIDTTDHGTWRRLRHYRSKVKFCHNPDPNNSYEKKEDPRFIHEYIMDPNCQNAFFSILVYFWEKLQKEYNGQIKKVFCPTIESETEAYRKSQDTLHRFITERVVESPSAETVYNLSEVVTAYAEWYNANINVKRHIALELSQELENSVLEKYLQWSPNKTRILKGCRILHKFETLQPGESYIGVSSTGTLLNTPICEPKNKWWEWSPNPSAPPEKEASAPTP</sequence>
<accession>P0C9X2</accession>
<name>H962R_ASFK5</name>